<gene>
    <name type="primary">bchH</name>
    <name type="ordered locus">RCAP_rcc00663</name>
</gene>
<organism>
    <name type="scientific">Rhodobacter capsulatus (strain ATCC BAA-309 / NBRC 16581 / SB1003)</name>
    <dbReference type="NCBI Taxonomy" id="272942"/>
    <lineage>
        <taxon>Bacteria</taxon>
        <taxon>Pseudomonadati</taxon>
        <taxon>Pseudomonadota</taxon>
        <taxon>Alphaproteobacteria</taxon>
        <taxon>Rhodobacterales</taxon>
        <taxon>Rhodobacter group</taxon>
        <taxon>Rhodobacter</taxon>
    </lineage>
</organism>
<evidence type="ECO:0000305" key="1"/>
<comment type="function">
    <text>Involved in bacteriochlorophyll pigment biosynthesis; introduces a magnesium ion into protoporphyrin IX to yield Mg-protoroporphyrin IX.</text>
</comment>
<comment type="catalytic activity">
    <reaction>
        <text>protoporphyrin IX + Mg(2+) + ATP + H2O = Mg-protoporphyrin IX + ADP + phosphate + 3 H(+)</text>
        <dbReference type="Rhea" id="RHEA:13961"/>
        <dbReference type="ChEBI" id="CHEBI:15377"/>
        <dbReference type="ChEBI" id="CHEBI:15378"/>
        <dbReference type="ChEBI" id="CHEBI:18420"/>
        <dbReference type="ChEBI" id="CHEBI:30616"/>
        <dbReference type="ChEBI" id="CHEBI:43474"/>
        <dbReference type="ChEBI" id="CHEBI:57306"/>
        <dbReference type="ChEBI" id="CHEBI:60492"/>
        <dbReference type="ChEBI" id="CHEBI:456216"/>
        <dbReference type="EC" id="6.6.1.1"/>
    </reaction>
</comment>
<comment type="pathway">
    <text>Porphyrin-containing compound metabolism; bacteriochlorophyll biosynthesis (light-independent).</text>
</comment>
<comment type="similarity">
    <text evidence="1">Belongs to the Mg-chelatase subunit H family.</text>
</comment>
<comment type="sequence caution" evidence="1">
    <conflict type="erroneous initiation">
        <sequence resource="EMBL-CDS" id="CAA77524"/>
    </conflict>
    <text>Extended N-terminus.</text>
</comment>
<accession>P26162</accession>
<accession>D5ANS4</accession>
<dbReference type="EC" id="6.6.1.1"/>
<dbReference type="EMBL" id="Z11165">
    <property type="protein sequence ID" value="CAA77524.1"/>
    <property type="status" value="ALT_INIT"/>
    <property type="molecule type" value="Genomic_DNA"/>
</dbReference>
<dbReference type="EMBL" id="CP001312">
    <property type="protein sequence ID" value="ADE84428.1"/>
    <property type="molecule type" value="Genomic_DNA"/>
</dbReference>
<dbReference type="EMBL" id="M34843">
    <property type="protein sequence ID" value="AAA26097.1"/>
    <property type="molecule type" value="Genomic_DNA"/>
</dbReference>
<dbReference type="PIR" id="D49851">
    <property type="entry name" value="D49851"/>
</dbReference>
<dbReference type="RefSeq" id="WP_013066407.1">
    <property type="nucleotide sequence ID" value="NC_014034.1"/>
</dbReference>
<dbReference type="SMR" id="P26162"/>
<dbReference type="IntAct" id="P26162">
    <property type="interactions" value="1"/>
</dbReference>
<dbReference type="MINT" id="P26162"/>
<dbReference type="STRING" id="272942.RCAP_rcc00663"/>
<dbReference type="GeneID" id="31489609"/>
<dbReference type="KEGG" id="rcp:RCAP_rcc00663"/>
<dbReference type="eggNOG" id="COG1429">
    <property type="taxonomic scope" value="Bacteria"/>
</dbReference>
<dbReference type="HOGENOM" id="CLU_002017_1_2_5"/>
<dbReference type="OrthoDB" id="9757976at2"/>
<dbReference type="BRENDA" id="6.6.1.1">
    <property type="organism ID" value="5381"/>
</dbReference>
<dbReference type="UniPathway" id="UPA00671"/>
<dbReference type="Proteomes" id="UP000002361">
    <property type="component" value="Chromosome"/>
</dbReference>
<dbReference type="GO" id="GO:0005524">
    <property type="term" value="F:ATP binding"/>
    <property type="evidence" value="ECO:0007669"/>
    <property type="project" value="UniProtKB-KW"/>
</dbReference>
<dbReference type="GO" id="GO:0016851">
    <property type="term" value="F:magnesium chelatase activity"/>
    <property type="evidence" value="ECO:0007669"/>
    <property type="project" value="UniProtKB-EC"/>
</dbReference>
<dbReference type="GO" id="GO:0036070">
    <property type="term" value="P:light-independent bacteriochlorophyll biosynthetic process"/>
    <property type="evidence" value="ECO:0007669"/>
    <property type="project" value="UniProtKB-UniPathway"/>
</dbReference>
<dbReference type="GO" id="GO:0015979">
    <property type="term" value="P:photosynthesis"/>
    <property type="evidence" value="ECO:0007669"/>
    <property type="project" value="UniProtKB-KW"/>
</dbReference>
<dbReference type="CDD" id="cd10150">
    <property type="entry name" value="CobN_like"/>
    <property type="match status" value="1"/>
</dbReference>
<dbReference type="InterPro" id="IPR003672">
    <property type="entry name" value="CobN/Mg_chltase"/>
</dbReference>
<dbReference type="InterPro" id="IPR022571">
    <property type="entry name" value="Mg_chelatase_H_N"/>
</dbReference>
<dbReference type="NCBIfam" id="NF009942">
    <property type="entry name" value="PRK13405.1"/>
    <property type="match status" value="1"/>
</dbReference>
<dbReference type="PANTHER" id="PTHR44119">
    <property type="entry name" value="MAGNESIUM-CHELATASE SUBUNIT CHLH, CHLOROPLASTIC"/>
    <property type="match status" value="1"/>
</dbReference>
<dbReference type="PANTHER" id="PTHR44119:SF1">
    <property type="entry name" value="MAGNESIUM-CHELATASE SUBUNIT CHLH, CHLOROPLASTIC"/>
    <property type="match status" value="1"/>
</dbReference>
<dbReference type="Pfam" id="PF02514">
    <property type="entry name" value="CobN-Mg_chel"/>
    <property type="match status" value="2"/>
</dbReference>
<dbReference type="Pfam" id="PF11965">
    <property type="entry name" value="DUF3479"/>
    <property type="match status" value="1"/>
</dbReference>
<sequence>MSGTMPLPPHRPGGYNVVIITLDQHAAGPAARALPRLQHDFPDIHVSVHAAAEWSENPAKLAAAKAAVLGANIVVANLLFIDEHLQAILPEMTAVRDNLDAFVGMVADPQIVRLTKMGDLDMTKPASGPMALLKKLRGKSEPGAGSAEKQMSMLRTIPKMLKFIPGKAQDLRAWFLCMQYWLGGSEDNIESMVRYLVGRYADNRDWRGIKAAAPIDYPEVGLYHPDMPGRITTDPAKLPQPANPVATIGILMLRSYILAKDTAHYDAVIRELQAHGVAVLPAFAGGLDGRPAIEEFLHGKIDTLLSLSGFSLVGGPAYNDSDAAVETLKALDVPYVTAQPLEFQTLGQWRASGGGLGPVETTMLIALPEIDGATNPTVFAGRHDPAGCLTCARGCKPDPEAESHAMAPCPERIETLVDKVVRMAKLRRSKVAERKVGIVLYGFPPNAGAAGTAAYLSVFESLFNVMHAMKASGYQMGELPESVQELRDAVLCGPNTTHGQPAQIAARIPAAEFVARTKWLKDIEAAWGSTPGKHQTDGRDVFVLGRQFGNVFVGLQPVFGYEGDPMRLLFEKGFAPTHAFAAFYRWLREDFAADTLLHFGMHGALEFMPGKQAGMCESCWPDRLIGNLPNVYLYAANNPSEATLAKRRSNAVIVSHLTPPLAQSGLYKGLAEIKESLGRLRALPPDSPEREDLEALVREQAKGVNMDASDLSTLWEKLLETEGALITEGLHVVGRPMTAEARAEMLALMPENADRARADKLLQEEHEIAGLLHALDGRYVPPVPGGDLVRSPEILPTGRNIHAFDPFRMPTAFAIKDGAAQAARLLATHPTLPRSIALVLWGSDNIKSDGGPIGQALALMGARPRFDNYGRLAGAELIPLSELGRPRIDVVMTLSGIFRDLLPLQTKLLAEAAYLCASAENEPLAQNFIRANVLATMQDTGMDFETASLRVFSNAEGAYGSNVNTLVGSAGFGDEDELADAYEARKSFAYGRDGKSTKQVNLLQNVLSKVDLAYQNLESVELGVTTVDHYFDTLGGIARATKRAQGGKETPVYIGDQTRGAGTVRTLQDQIALETRARSLNPKFYEGLLKHGAEGVRQIEAQVTNTLGWSATTGQVEPWVYQRLSETFVLDDEMRERLASLNSAASSRMAQRLLEASDRNYWQPDPATLAALQAAADELEDRMEGVAAE</sequence>
<protein>
    <recommendedName>
        <fullName>Magnesium-chelatase subunit H</fullName>
        <ecNumber>6.6.1.1</ecNumber>
    </recommendedName>
    <alternativeName>
        <fullName>Mg-protoporphyrin IX chelatase subunit H</fullName>
    </alternativeName>
</protein>
<reference key="1">
    <citation type="journal article" date="1993" name="J. Bacteriol.">
        <title>bchFNBH bacteriochlorophyll synthesis genes of Rhodobacter capsulatus and identification of the third subunit of light-independent protochlorophyllide reductase in bacteria and plants.</title>
        <authorList>
            <person name="Burke D.H."/>
            <person name="Alberti M."/>
            <person name="Hearst J.E."/>
        </authorList>
    </citation>
    <scope>NUCLEOTIDE SEQUENCE [GENOMIC DNA]</scope>
    <source>
        <strain>ATCC BAA-309 / NBRC 16581 / SB1003</strain>
    </source>
</reference>
<reference key="2">
    <citation type="journal article" date="2010" name="J. Bacteriol.">
        <title>Complete genome sequence of the photosynthetic purple nonsulfur bacterium Rhodobacter capsulatus SB 1003.</title>
        <authorList>
            <person name="Strnad H."/>
            <person name="Lapidus A."/>
            <person name="Paces J."/>
            <person name="Ulbrich P."/>
            <person name="Vlcek C."/>
            <person name="Paces V."/>
            <person name="Haselkorn R."/>
        </authorList>
    </citation>
    <scope>NUCLEOTIDE SEQUENCE [LARGE SCALE GENOMIC DNA]</scope>
    <source>
        <strain>ATCC BAA-309 / NBRC 16581 / SB1003</strain>
    </source>
</reference>
<reference key="3">
    <citation type="journal article" date="1990" name="J. Bacteriol.">
        <title>Rhodobacter capsulatus genes involved in early steps of the bacteriochlorophyll biosynthetic pathway.</title>
        <authorList>
            <person name="Yang Z.M."/>
            <person name="Bauer C.E."/>
        </authorList>
    </citation>
    <scope>NUCLEOTIDE SEQUENCE [GENOMIC DNA] OF 1165-1189</scope>
    <source>
        <strain>ATCC BAA-309 / NBRC 16581 / SB1003</strain>
    </source>
</reference>
<feature type="chain" id="PRO_0000219885" description="Magnesium-chelatase subunit H">
    <location>
        <begin position="1"/>
        <end position="1189"/>
    </location>
</feature>
<proteinExistence type="inferred from homology"/>
<name>BCHH_RHOCB</name>
<keyword id="KW-0067">ATP-binding</keyword>
<keyword id="KW-0077">Bacteriochlorophyll biosynthesis</keyword>
<keyword id="KW-0149">Chlorophyll biosynthesis</keyword>
<keyword id="KW-0436">Ligase</keyword>
<keyword id="KW-0547">Nucleotide-binding</keyword>
<keyword id="KW-0602">Photosynthesis</keyword>
<keyword id="KW-1185">Reference proteome</keyword>